<name>RTC5_ASPCL</name>
<keyword id="KW-0963">Cytoplasm</keyword>
<keyword id="KW-1185">Reference proteome</keyword>
<feature type="chain" id="PRO_0000408813" description="Restriction of telomere capping protein 5">
    <location>
        <begin position="1"/>
        <end position="642"/>
    </location>
</feature>
<feature type="domain" description="TLDc" evidence="2">
    <location>
        <begin position="353"/>
        <end position="571"/>
    </location>
</feature>
<feature type="region of interest" description="Disordered" evidence="3">
    <location>
        <begin position="143"/>
        <end position="186"/>
    </location>
</feature>
<feature type="compositionally biased region" description="Basic and acidic residues" evidence="3">
    <location>
        <begin position="154"/>
        <end position="163"/>
    </location>
</feature>
<feature type="compositionally biased region" description="Acidic residues" evidence="3">
    <location>
        <begin position="177"/>
        <end position="186"/>
    </location>
</feature>
<sequence length="642" mass="69929">MGLGQSTEQAGHSPEQLSHVLAERFATKCFTPLELTHFKDNFFSRAIDQEGIKYWSEKILSDFLGIPDSSDSHCPLDAGPVLFRMVSYLGAFPFQNTMAPSVLTFEAMVKVVVLLTERYGKVLRRARRDRVKLLFGSLADVGRRGAGQPPDENADNKEEDKSSTAKSHATGFAVDDPANDNYEDDEDDDDLVLAALESLDAIDVFKHDSRVDKTVYEARISVATFRRLLMLLIVIAPLSSLEPVKKYTSDLNEERMDNVRQEADSILAAFDLNKSADGISFQSFSEIVSGSLPYLFDPLTTLFEHLLFSKNLDLSQKRGGTETTIVADTAEEVSESPLSSPSSIMLPGSFESTILKPSAISHLSFFLSSPATDVNLLRGNMRLHPVFSTVAHGSSLTSFSHNVLTWNSGTLLLLEGAVTESSDRGVGTITLGAYLPQHWKSGPLAHSPSRPFDSLSLPCLFELSPKHLLMQGNTSPSVHKPNAPSAYFSTNTGIAIGCQIPPPSRSQQFEPTPLGAGSLIIDASLESATFYASPIGHNGVFLPSPSVSKNGSETTSKMQIDIYTLEVWGLVPDPSDETLTEPGHNAIERQRARWDFEAREAERRRSLNLKAGAGDSAMEGARWLLETAGLIGDRPGRSGGSM</sequence>
<dbReference type="EMBL" id="DS027054">
    <property type="protein sequence ID" value="EAW10275.1"/>
    <property type="molecule type" value="Genomic_DNA"/>
</dbReference>
<dbReference type="RefSeq" id="XP_001271701.1">
    <property type="nucleotide sequence ID" value="XM_001271700.1"/>
</dbReference>
<dbReference type="SMR" id="A1CHC0"/>
<dbReference type="STRING" id="344612.A1CHC0"/>
<dbReference type="EnsemblFungi" id="EAW10275">
    <property type="protein sequence ID" value="EAW10275"/>
    <property type="gene ID" value="ACLA_047440"/>
</dbReference>
<dbReference type="GeneID" id="4704322"/>
<dbReference type="KEGG" id="act:ACLA_047440"/>
<dbReference type="VEuPathDB" id="FungiDB:ACLA_047440"/>
<dbReference type="eggNOG" id="ENOG502QV3R">
    <property type="taxonomic scope" value="Eukaryota"/>
</dbReference>
<dbReference type="HOGENOM" id="CLU_011918_1_0_1"/>
<dbReference type="OMA" id="KWEFEAR"/>
<dbReference type="OrthoDB" id="289228at2759"/>
<dbReference type="Proteomes" id="UP000006701">
    <property type="component" value="Unassembled WGS sequence"/>
</dbReference>
<dbReference type="GO" id="GO:0005737">
    <property type="term" value="C:cytoplasm"/>
    <property type="evidence" value="ECO:0007669"/>
    <property type="project" value="UniProtKB-SubCell"/>
</dbReference>
<dbReference type="InterPro" id="IPR006571">
    <property type="entry name" value="TLDc_dom"/>
</dbReference>
<dbReference type="Pfam" id="PF07534">
    <property type="entry name" value="TLD"/>
    <property type="match status" value="1"/>
</dbReference>
<dbReference type="SMART" id="SM00584">
    <property type="entry name" value="TLDc"/>
    <property type="match status" value="1"/>
</dbReference>
<dbReference type="PROSITE" id="PS51886">
    <property type="entry name" value="TLDC"/>
    <property type="match status" value="1"/>
</dbReference>
<accession>A1CHC0</accession>
<proteinExistence type="inferred from homology"/>
<evidence type="ECO:0000250" key="1"/>
<evidence type="ECO:0000255" key="2">
    <source>
        <dbReference type="PROSITE-ProRule" id="PRU01234"/>
    </source>
</evidence>
<evidence type="ECO:0000256" key="3">
    <source>
        <dbReference type="SAM" id="MobiDB-lite"/>
    </source>
</evidence>
<evidence type="ECO:0000305" key="4"/>
<reference key="1">
    <citation type="journal article" date="2008" name="PLoS Genet.">
        <title>Genomic islands in the pathogenic filamentous fungus Aspergillus fumigatus.</title>
        <authorList>
            <person name="Fedorova N.D."/>
            <person name="Khaldi N."/>
            <person name="Joardar V.S."/>
            <person name="Maiti R."/>
            <person name="Amedeo P."/>
            <person name="Anderson M.J."/>
            <person name="Crabtree J."/>
            <person name="Silva J.C."/>
            <person name="Badger J.H."/>
            <person name="Albarraq A."/>
            <person name="Angiuoli S."/>
            <person name="Bussey H."/>
            <person name="Bowyer P."/>
            <person name="Cotty P.J."/>
            <person name="Dyer P.S."/>
            <person name="Egan A."/>
            <person name="Galens K."/>
            <person name="Fraser-Liggett C.M."/>
            <person name="Haas B.J."/>
            <person name="Inman J.M."/>
            <person name="Kent R."/>
            <person name="Lemieux S."/>
            <person name="Malavazi I."/>
            <person name="Orvis J."/>
            <person name="Roemer T."/>
            <person name="Ronning C.M."/>
            <person name="Sundaram J.P."/>
            <person name="Sutton G."/>
            <person name="Turner G."/>
            <person name="Venter J.C."/>
            <person name="White O.R."/>
            <person name="Whitty B.R."/>
            <person name="Youngman P."/>
            <person name="Wolfe K.H."/>
            <person name="Goldman G.H."/>
            <person name="Wortman J.R."/>
            <person name="Jiang B."/>
            <person name="Denning D.W."/>
            <person name="Nierman W.C."/>
        </authorList>
    </citation>
    <scope>NUCLEOTIDE SEQUENCE [LARGE SCALE GENOMIC DNA]</scope>
    <source>
        <strain>ATCC 1007 / CBS 513.65 / DSM 816 / NCTC 3887 / NRRL 1 / QM 1276 / 107</strain>
    </source>
</reference>
<comment type="function">
    <text evidence="1">May be involved in a process influencing telomere capping.</text>
</comment>
<comment type="subcellular location">
    <subcellularLocation>
        <location evidence="1">Cytoplasm</location>
    </subcellularLocation>
</comment>
<comment type="similarity">
    <text evidence="4">Belongs to the RTC5 family.</text>
</comment>
<protein>
    <recommendedName>
        <fullName>Restriction of telomere capping protein 5</fullName>
    </recommendedName>
</protein>
<gene>
    <name type="primary">rtc5</name>
    <name type="ORF">ACLA_047440</name>
</gene>
<organism>
    <name type="scientific">Aspergillus clavatus (strain ATCC 1007 / CBS 513.65 / DSM 816 / NCTC 3887 / NRRL 1 / QM 1276 / 107)</name>
    <dbReference type="NCBI Taxonomy" id="344612"/>
    <lineage>
        <taxon>Eukaryota</taxon>
        <taxon>Fungi</taxon>
        <taxon>Dikarya</taxon>
        <taxon>Ascomycota</taxon>
        <taxon>Pezizomycotina</taxon>
        <taxon>Eurotiomycetes</taxon>
        <taxon>Eurotiomycetidae</taxon>
        <taxon>Eurotiales</taxon>
        <taxon>Aspergillaceae</taxon>
        <taxon>Aspergillus</taxon>
        <taxon>Aspergillus subgen. Fumigati</taxon>
    </lineage>
</organism>